<organism>
    <name type="scientific">Clostridium perfringens (strain 13 / Type A)</name>
    <dbReference type="NCBI Taxonomy" id="195102"/>
    <lineage>
        <taxon>Bacteria</taxon>
        <taxon>Bacillati</taxon>
        <taxon>Bacillota</taxon>
        <taxon>Clostridia</taxon>
        <taxon>Eubacteriales</taxon>
        <taxon>Clostridiaceae</taxon>
        <taxon>Clostridium</taxon>
    </lineage>
</organism>
<feature type="chain" id="PRO_0000197840" description="Exodeoxyribonuclease 7 large subunit">
    <location>
        <begin position="1"/>
        <end position="400"/>
    </location>
</feature>
<gene>
    <name evidence="1" type="primary">xseA</name>
    <name type="ordered locus">CPE1822</name>
</gene>
<accession>Q8XJD8</accession>
<protein>
    <recommendedName>
        <fullName evidence="1">Exodeoxyribonuclease 7 large subunit</fullName>
        <ecNumber evidence="1">3.1.11.6</ecNumber>
    </recommendedName>
    <alternativeName>
        <fullName evidence="1">Exodeoxyribonuclease VII large subunit</fullName>
        <shortName evidence="1">Exonuclease VII large subunit</shortName>
    </alternativeName>
</protein>
<reference key="1">
    <citation type="journal article" date="2002" name="Proc. Natl. Acad. Sci. U.S.A.">
        <title>Complete genome sequence of Clostridium perfringens, an anaerobic flesh-eater.</title>
        <authorList>
            <person name="Shimizu T."/>
            <person name="Ohtani K."/>
            <person name="Hirakawa H."/>
            <person name="Ohshima K."/>
            <person name="Yamashita A."/>
            <person name="Shiba T."/>
            <person name="Ogasawara N."/>
            <person name="Hattori M."/>
            <person name="Kuhara S."/>
            <person name="Hayashi H."/>
        </authorList>
    </citation>
    <scope>NUCLEOTIDE SEQUENCE [LARGE SCALE GENOMIC DNA]</scope>
    <source>
        <strain>13 / Type A</strain>
    </source>
</reference>
<name>EX7L_CLOPE</name>
<evidence type="ECO:0000255" key="1">
    <source>
        <dbReference type="HAMAP-Rule" id="MF_00378"/>
    </source>
</evidence>
<dbReference type="EC" id="3.1.11.6" evidence="1"/>
<dbReference type="EMBL" id="BA000016">
    <property type="protein sequence ID" value="BAB81528.1"/>
    <property type="molecule type" value="Genomic_DNA"/>
</dbReference>
<dbReference type="RefSeq" id="WP_003481866.1">
    <property type="nucleotide sequence ID" value="NC_003366.1"/>
</dbReference>
<dbReference type="SMR" id="Q8XJD8"/>
<dbReference type="STRING" id="195102.gene:10491086"/>
<dbReference type="KEGG" id="cpe:CPE1822"/>
<dbReference type="HOGENOM" id="CLU_023625_3_1_9"/>
<dbReference type="Proteomes" id="UP000000818">
    <property type="component" value="Chromosome"/>
</dbReference>
<dbReference type="GO" id="GO:0005737">
    <property type="term" value="C:cytoplasm"/>
    <property type="evidence" value="ECO:0007669"/>
    <property type="project" value="UniProtKB-SubCell"/>
</dbReference>
<dbReference type="GO" id="GO:0009318">
    <property type="term" value="C:exodeoxyribonuclease VII complex"/>
    <property type="evidence" value="ECO:0007669"/>
    <property type="project" value="InterPro"/>
</dbReference>
<dbReference type="GO" id="GO:0008855">
    <property type="term" value="F:exodeoxyribonuclease VII activity"/>
    <property type="evidence" value="ECO:0007669"/>
    <property type="project" value="UniProtKB-UniRule"/>
</dbReference>
<dbReference type="GO" id="GO:0003676">
    <property type="term" value="F:nucleic acid binding"/>
    <property type="evidence" value="ECO:0007669"/>
    <property type="project" value="InterPro"/>
</dbReference>
<dbReference type="GO" id="GO:0006308">
    <property type="term" value="P:DNA catabolic process"/>
    <property type="evidence" value="ECO:0007669"/>
    <property type="project" value="UniProtKB-UniRule"/>
</dbReference>
<dbReference type="CDD" id="cd04489">
    <property type="entry name" value="ExoVII_LU_OBF"/>
    <property type="match status" value="1"/>
</dbReference>
<dbReference type="HAMAP" id="MF_00378">
    <property type="entry name" value="Exonuc_7_L"/>
    <property type="match status" value="1"/>
</dbReference>
<dbReference type="InterPro" id="IPR003753">
    <property type="entry name" value="Exonuc_VII_L"/>
</dbReference>
<dbReference type="InterPro" id="IPR020579">
    <property type="entry name" value="Exonuc_VII_lsu_C"/>
</dbReference>
<dbReference type="InterPro" id="IPR025824">
    <property type="entry name" value="OB-fold_nuc-bd_dom"/>
</dbReference>
<dbReference type="NCBIfam" id="TIGR00237">
    <property type="entry name" value="xseA"/>
    <property type="match status" value="1"/>
</dbReference>
<dbReference type="PANTHER" id="PTHR30008">
    <property type="entry name" value="EXODEOXYRIBONUCLEASE 7 LARGE SUBUNIT"/>
    <property type="match status" value="1"/>
</dbReference>
<dbReference type="PANTHER" id="PTHR30008:SF0">
    <property type="entry name" value="EXODEOXYRIBONUCLEASE 7 LARGE SUBUNIT"/>
    <property type="match status" value="1"/>
</dbReference>
<dbReference type="Pfam" id="PF02601">
    <property type="entry name" value="Exonuc_VII_L"/>
    <property type="match status" value="2"/>
</dbReference>
<dbReference type="Pfam" id="PF13742">
    <property type="entry name" value="tRNA_anti_2"/>
    <property type="match status" value="1"/>
</dbReference>
<keyword id="KW-0963">Cytoplasm</keyword>
<keyword id="KW-0269">Exonuclease</keyword>
<keyword id="KW-0378">Hydrolase</keyword>
<keyword id="KW-0540">Nuclease</keyword>
<keyword id="KW-1185">Reference proteome</keyword>
<proteinExistence type="inferred from homology"/>
<sequence>MKLKTLSVGEVNNYVKKLVENDFILKNLNVKGEISNLKFHSSGHIYFSLKDENSKVNCIMFKNNAVNLDFRLEEGMKVEIKARLGVYHKEGTYQLYCENIKKAGIGELFEEFHKLKKELSEEGIFDEKYKRALPKFPKRIGIITARTGAAVRDIINVIQRRNKSLDIILYPAKVQGENAADSIIEGIRYFNNEKSVDVIILGRGGGSIEELWAFNNRDLAYEIFNSRIPTVSAVGHEVDFTISDFVSDMRAPTPSAAGELVSPSLQEMINDLLNKKEFLHRAVDRRFLNAKRDVDLLHKGLKGNNPTHIIEKRIKEVNTLEEKLNFLGKRKIDKAKDELIALNSILQTLNPLNTLGRGYSVIMDKEDKVINKVSELKKNDMVKVIMKDGSVNIDIKIINE</sequence>
<comment type="function">
    <text evidence="1">Bidirectionally degrades single-stranded DNA into large acid-insoluble oligonucleotides, which are then degraded further into small acid-soluble oligonucleotides.</text>
</comment>
<comment type="catalytic activity">
    <reaction evidence="1">
        <text>Exonucleolytic cleavage in either 5'- to 3'- or 3'- to 5'-direction to yield nucleoside 5'-phosphates.</text>
        <dbReference type="EC" id="3.1.11.6"/>
    </reaction>
</comment>
<comment type="subunit">
    <text evidence="1">Heterooligomer composed of large and small subunits.</text>
</comment>
<comment type="subcellular location">
    <subcellularLocation>
        <location evidence="1">Cytoplasm</location>
    </subcellularLocation>
</comment>
<comment type="similarity">
    <text evidence="1">Belongs to the XseA family.</text>
</comment>